<accession>Q59223</accession>
<gene>
    <name type="primary">npr</name>
</gene>
<comment type="function">
    <text>Extracellular zinc metalloprotease. Has collagenase activity.</text>
</comment>
<comment type="catalytic activity">
    <reaction>
        <text>Preferential cleavage: Xaa-|-Leu &gt; Xaa-|-Phe.</text>
        <dbReference type="EC" id="3.4.24.27"/>
    </reaction>
</comment>
<comment type="cofactor">
    <cofactor>
        <name>Ca(2+)</name>
        <dbReference type="ChEBI" id="CHEBI:29108"/>
    </cofactor>
    <text>Binds 4 Ca(2+) ions per subunit.</text>
</comment>
<comment type="cofactor">
    <cofactor>
        <name>Zn(2+)</name>
        <dbReference type="ChEBI" id="CHEBI:29105"/>
    </cofactor>
    <text>Binds 1 zinc ion per subunit.</text>
</comment>
<comment type="biophysicochemical properties">
    <temperatureDependence>
        <text>Thermostable.</text>
    </temperatureDependence>
</comment>
<comment type="subcellular location">
    <subcellularLocation>
        <location>Secreted</location>
    </subcellularLocation>
</comment>
<comment type="similarity">
    <text evidence="4">Belongs to the peptidase M4 family.</text>
</comment>
<evidence type="ECO:0000250" key="1"/>
<evidence type="ECO:0000255" key="2"/>
<evidence type="ECO:0000255" key="3">
    <source>
        <dbReference type="PROSITE-ProRule" id="PRU10095"/>
    </source>
</evidence>
<evidence type="ECO:0000305" key="4"/>
<dbReference type="EC" id="3.4.24.27"/>
<dbReference type="EMBL" id="U25630">
    <property type="protein sequence ID" value="AAB18653.1"/>
    <property type="molecule type" value="Genomic_DNA"/>
</dbReference>
<dbReference type="PIR" id="S72175">
    <property type="entry name" value="S72175"/>
</dbReference>
<dbReference type="SMR" id="Q59223"/>
<dbReference type="MEROPS" id="M04.018"/>
<dbReference type="GO" id="GO:0005576">
    <property type="term" value="C:extracellular region"/>
    <property type="evidence" value="ECO:0007669"/>
    <property type="project" value="UniProtKB-SubCell"/>
</dbReference>
<dbReference type="GO" id="GO:0046872">
    <property type="term" value="F:metal ion binding"/>
    <property type="evidence" value="ECO:0007669"/>
    <property type="project" value="UniProtKB-KW"/>
</dbReference>
<dbReference type="GO" id="GO:0004222">
    <property type="term" value="F:metalloendopeptidase activity"/>
    <property type="evidence" value="ECO:0007669"/>
    <property type="project" value="InterPro"/>
</dbReference>
<dbReference type="GO" id="GO:0006508">
    <property type="term" value="P:proteolysis"/>
    <property type="evidence" value="ECO:0007669"/>
    <property type="project" value="UniProtKB-KW"/>
</dbReference>
<dbReference type="CDD" id="cd09597">
    <property type="entry name" value="M4_TLP"/>
    <property type="match status" value="1"/>
</dbReference>
<dbReference type="FunFam" id="1.10.390.10:FF:000012">
    <property type="entry name" value="Thermolysin"/>
    <property type="match status" value="1"/>
</dbReference>
<dbReference type="Gene3D" id="3.10.170.10">
    <property type="match status" value="1"/>
</dbReference>
<dbReference type="Gene3D" id="3.10.450.40">
    <property type="match status" value="1"/>
</dbReference>
<dbReference type="Gene3D" id="3.10.450.490">
    <property type="match status" value="1"/>
</dbReference>
<dbReference type="Gene3D" id="1.10.390.10">
    <property type="entry name" value="Neutral Protease Domain 2"/>
    <property type="match status" value="1"/>
</dbReference>
<dbReference type="InterPro" id="IPR011096">
    <property type="entry name" value="FTP_domain"/>
</dbReference>
<dbReference type="InterPro" id="IPR025711">
    <property type="entry name" value="PepSY"/>
</dbReference>
<dbReference type="InterPro" id="IPR023612">
    <property type="entry name" value="Peptidase_M4"/>
</dbReference>
<dbReference type="InterPro" id="IPR027268">
    <property type="entry name" value="Peptidase_M4/M1_CTD_sf"/>
</dbReference>
<dbReference type="InterPro" id="IPR001570">
    <property type="entry name" value="Peptidase_M4_C_domain"/>
</dbReference>
<dbReference type="InterPro" id="IPR013856">
    <property type="entry name" value="Peptidase_M4_domain"/>
</dbReference>
<dbReference type="InterPro" id="IPR050728">
    <property type="entry name" value="Zinc_Metalloprotease_M4"/>
</dbReference>
<dbReference type="PANTHER" id="PTHR33794">
    <property type="entry name" value="BACILLOLYSIN"/>
    <property type="match status" value="1"/>
</dbReference>
<dbReference type="PANTHER" id="PTHR33794:SF3">
    <property type="entry name" value="NEUTRAL PROTEASE B"/>
    <property type="match status" value="1"/>
</dbReference>
<dbReference type="Pfam" id="PF07504">
    <property type="entry name" value="FTP"/>
    <property type="match status" value="1"/>
</dbReference>
<dbReference type="Pfam" id="PF03413">
    <property type="entry name" value="PepSY"/>
    <property type="match status" value="1"/>
</dbReference>
<dbReference type="Pfam" id="PF01447">
    <property type="entry name" value="Peptidase_M4"/>
    <property type="match status" value="1"/>
</dbReference>
<dbReference type="Pfam" id="PF02868">
    <property type="entry name" value="Peptidase_M4_C"/>
    <property type="match status" value="1"/>
</dbReference>
<dbReference type="PRINTS" id="PR00730">
    <property type="entry name" value="THERMOLYSIN"/>
</dbReference>
<dbReference type="SUPFAM" id="SSF55486">
    <property type="entry name" value="Metalloproteases ('zincins'), catalytic domain"/>
    <property type="match status" value="1"/>
</dbReference>
<dbReference type="PROSITE" id="PS00142">
    <property type="entry name" value="ZINC_PROTEASE"/>
    <property type="match status" value="1"/>
</dbReference>
<keyword id="KW-0106">Calcium</keyword>
<keyword id="KW-0378">Hydrolase</keyword>
<keyword id="KW-0479">Metal-binding</keyword>
<keyword id="KW-0482">Metalloprotease</keyword>
<keyword id="KW-0645">Protease</keyword>
<keyword id="KW-0964">Secreted</keyword>
<keyword id="KW-0732">Signal</keyword>
<keyword id="KW-0862">Zinc</keyword>
<keyword id="KW-0865">Zymogen</keyword>
<organism>
    <name type="scientific">Bacillus sp. (strain EA1)</name>
    <dbReference type="NCBI Taxonomy" id="246599"/>
    <lineage>
        <taxon>Bacteria</taxon>
        <taxon>Bacillati</taxon>
        <taxon>Bacillota</taxon>
        <taxon>Bacilli</taxon>
        <taxon>Bacillales</taxon>
        <taxon>Bacillaceae</taxon>
        <taxon>Bacillus</taxon>
    </lineage>
</organism>
<name>THER_BACSO</name>
<reference key="1">
    <citation type="journal article" date="1996" name="Biochim. Biophys. Acta">
        <title>Sequence of the gene encoding a highly thermostable neutral proteinase from Bacillus sp. strain EA1: expression in Escherichia coli and characterisation.</title>
        <authorList>
            <person name="Saul D.J."/>
            <person name="Williams L.C."/>
            <person name="Toogood H.S."/>
            <person name="Daniel R.M."/>
            <person name="Bergquist P.L."/>
        </authorList>
    </citation>
    <scope>NUCLEOTIDE SEQUENCE [GENOMIC DNA]</scope>
</reference>
<feature type="signal peptide" evidence="2">
    <location>
        <begin position="1"/>
        <end position="25"/>
    </location>
</feature>
<feature type="propeptide" id="PRO_0000028588" description="Activation peptide">
    <location>
        <begin position="26"/>
        <end position="228"/>
    </location>
</feature>
<feature type="chain" id="PRO_0000028589" description="Thermolysin">
    <location>
        <begin position="229"/>
        <end position="546"/>
    </location>
</feature>
<feature type="active site" evidence="3">
    <location>
        <position position="373"/>
    </location>
</feature>
<feature type="active site" description="Proton donor" evidence="3">
    <location>
        <position position="461"/>
    </location>
</feature>
<feature type="binding site" evidence="1">
    <location>
        <position position="287"/>
    </location>
    <ligand>
        <name>Ca(2+)</name>
        <dbReference type="ChEBI" id="CHEBI:29108"/>
        <label>1</label>
    </ligand>
</feature>
<feature type="binding site" evidence="1">
    <location>
        <position position="289"/>
    </location>
    <ligand>
        <name>Ca(2+)</name>
        <dbReference type="ChEBI" id="CHEBI:29108"/>
        <label>1</label>
    </ligand>
</feature>
<feature type="binding site" evidence="1">
    <location>
        <position position="291"/>
    </location>
    <ligand>
        <name>Ca(2+)</name>
        <dbReference type="ChEBI" id="CHEBI:29108"/>
        <label>1</label>
    </ligand>
</feature>
<feature type="binding site" evidence="1">
    <location>
        <position position="368"/>
    </location>
    <ligand>
        <name>Ca(2+)</name>
        <dbReference type="ChEBI" id="CHEBI:29108"/>
        <label>2</label>
    </ligand>
</feature>
<feature type="binding site" evidence="3">
    <location>
        <position position="372"/>
    </location>
    <ligand>
        <name>Zn(2+)</name>
        <dbReference type="ChEBI" id="CHEBI:29105"/>
        <note>catalytic</note>
    </ligand>
</feature>
<feature type="binding site" evidence="3">
    <location>
        <position position="376"/>
    </location>
    <ligand>
        <name>Zn(2+)</name>
        <dbReference type="ChEBI" id="CHEBI:29105"/>
        <note>catalytic</note>
    </ligand>
</feature>
<feature type="binding site" evidence="3">
    <location>
        <position position="396"/>
    </location>
    <ligand>
        <name>Zn(2+)</name>
        <dbReference type="ChEBI" id="CHEBI:29105"/>
        <note>catalytic</note>
    </ligand>
</feature>
<feature type="binding site" evidence="1">
    <location>
        <position position="413"/>
    </location>
    <ligand>
        <name>Ca(2+)</name>
        <dbReference type="ChEBI" id="CHEBI:29108"/>
        <label>3</label>
    </ligand>
</feature>
<feature type="binding site" evidence="1">
    <location>
        <position position="415"/>
    </location>
    <ligand>
        <name>Ca(2+)</name>
        <dbReference type="ChEBI" id="CHEBI:29108"/>
        <label>2</label>
    </ligand>
</feature>
<feature type="binding site" evidence="1">
    <location>
        <position position="415"/>
    </location>
    <ligand>
        <name>Ca(2+)</name>
        <dbReference type="ChEBI" id="CHEBI:29108"/>
        <label>3</label>
    </ligand>
</feature>
<feature type="binding site" evidence="1">
    <location>
        <position position="417"/>
    </location>
    <ligand>
        <name>Ca(2+)</name>
        <dbReference type="ChEBI" id="CHEBI:29108"/>
        <label>2</label>
    </ligand>
</feature>
<feature type="binding site" evidence="1">
    <location>
        <position position="420"/>
    </location>
    <ligand>
        <name>Ca(2+)</name>
        <dbReference type="ChEBI" id="CHEBI:29108"/>
        <label>2</label>
    </ligand>
</feature>
<feature type="binding site" evidence="1">
    <location>
        <position position="420"/>
    </location>
    <ligand>
        <name>Ca(2+)</name>
        <dbReference type="ChEBI" id="CHEBI:29108"/>
        <label>3</label>
    </ligand>
</feature>
<feature type="binding site" evidence="1">
    <location>
        <position position="423"/>
    </location>
    <ligand>
        <name>Ca(2+)</name>
        <dbReference type="ChEBI" id="CHEBI:29108"/>
        <label>4</label>
    </ligand>
</feature>
<feature type="binding site" evidence="1">
    <location>
        <position position="424"/>
    </location>
    <ligand>
        <name>Ca(2+)</name>
        <dbReference type="ChEBI" id="CHEBI:29108"/>
        <label>4</label>
    </ligand>
</feature>
<feature type="binding site" evidence="1">
    <location>
        <position position="427"/>
    </location>
    <ligand>
        <name>Ca(2+)</name>
        <dbReference type="ChEBI" id="CHEBI:29108"/>
        <label>4</label>
    </ligand>
</feature>
<feature type="binding site" evidence="1">
    <location>
        <position position="430"/>
    </location>
    <ligand>
        <name>Ca(2+)</name>
        <dbReference type="ChEBI" id="CHEBI:29108"/>
        <label>4</label>
    </ligand>
</feature>
<proteinExistence type="evidence at protein level"/>
<sequence>MDKRAMLGAIGLAFGLMAWPFGASAKEKSMVWNEQWKTPSFVSGSLLKGEDAPEELVYRYLDQEKNTFQLGGQARERLSLIGKQTDELGHTVMRFEQRYRGIPVYGAVLVAHVNDGELSSLSGTLIPNLDKRTLKTEAAISIQQAEMIAKQDVADAVTKERPAAEEGKPTRLVIYPDGETPRLAYEVNVRFLTPVPGNWIYMIDAADGKVLNKWNQMDEAKPGGGQPVAGTSTVGVGRGVLGDQKYINTTYSSYYGYYYLQDNTRGSGIFTYDGRNRTVLPGSLWADVDNQFFASYDAAAVDAHYYAGVVYDYYKNVHGRLSYDGSNAAIRSTVHYGRGYNNAFWNGSQMVYGDGDGQTFLPFSGGIDVVGHELTHAVTDYTAGLVYQNESGAINEAMSDIFGTLVEFYANRNPDWEIGEDIYTPGIAGDALRSMSDPAKYGDPDHYSKRYTGTQDNGGVHTNSGIINKAAYLLSQGGVHYGVSVTGIGRDKMGKIFYRALVYYLTPTSNFSQLRAACVQAAADLYGSTSQEVNSVKQAFNAVGVY</sequence>
<protein>
    <recommendedName>
        <fullName>Thermolysin</fullName>
        <ecNumber>3.4.24.27</ecNumber>
    </recommendedName>
    <alternativeName>
        <fullName>Thermostable neutral proteinase</fullName>
    </alternativeName>
</protein>